<sequence>MSFIYGLQSAARNCFFFRFNLLTNWRKCNTQAVTSRDFHQVKINHIVNKSLGLGVNHGDRWTPLPENFLFYRTFNTKRKGCLLSSRSKEIWMISRKCTAWTDSFSRQLPMKNVPVVPAHSMSHPLNCLPTRDIRSFHTSPRCQAAPAPLLLMILKPAQKLLAIIVGRGIRKWWQALPPNKKELFKESLRKNKWKLFLGLSSFGLLFVVFYFTHLEVSPVTGRSKLLILGKEHFRLLSELEYEAWMEEFKNDMLTEKDARYVAVKAVVHHLIECNQDIPGISEINWIIHVVDSPDINAFVLPNGQVFVFTGLLNSVTDIHQLSFLLGHEIAHAVLEHAAEKASLVHLLDFLGLIFLTTIWAICPRDSLALLGQWIQSKLQEFLFDRPYSRTLEAEADRIGLQLAAKACVDVRASSVFWQQMEFAESLHGHPKLPEWLSTHPSHGNRAEHLDRLIPQALKIRETCNCPPLSGPDPRLLFKLSMKNFLEAEKEDLNITVKQKMDALPIQNQKQIPLTCIVDKRTGS</sequence>
<proteinExistence type="evidence at transcript level"/>
<feature type="transit peptide" description="Mitochondrion" evidence="5">
    <location>
        <begin position="1"/>
        <end position="45"/>
    </location>
</feature>
<feature type="propeptide" id="PRO_0000450311" evidence="4">
    <location>
        <begin position="46"/>
        <end position="143"/>
    </location>
</feature>
<feature type="chain" id="PRO_0000302808" description="Metalloendopeptidase OMA1, mitochondrial">
    <location>
        <begin position="144"/>
        <end status="unknown"/>
    </location>
</feature>
<feature type="propeptide" id="PRO_0000450312" evidence="4">
    <location>
        <begin status="unknown"/>
        <end position="523"/>
    </location>
</feature>
<feature type="topological domain" description="Mitochondrial matrix" evidence="4">
    <location>
        <begin position="144"/>
        <end position="195"/>
    </location>
</feature>
<feature type="transmembrane region" description="Helical" evidence="5">
    <location>
        <begin position="196"/>
        <end position="216"/>
    </location>
</feature>
<feature type="topological domain" description="Mitochondrial intermembrane" evidence="4">
    <location>
        <begin position="217"/>
        <end status="unknown"/>
    </location>
</feature>
<feature type="region of interest" description="Cardiolipin-binding" evidence="4">
    <location>
        <begin position="148"/>
        <end position="167"/>
    </location>
</feature>
<feature type="region of interest" description="Stress-sensor region" evidence="4">
    <location>
        <begin position="165"/>
        <end position="195"/>
    </location>
</feature>
<feature type="active site" evidence="6">
    <location>
        <position position="328"/>
    </location>
</feature>
<feature type="binding site" evidence="6">
    <location>
        <position position="327"/>
    </location>
    <ligand>
        <name>Zn(2+)</name>
        <dbReference type="ChEBI" id="CHEBI:29105"/>
        <note>catalytic</note>
    </ligand>
</feature>
<feature type="binding site" evidence="6">
    <location>
        <position position="331"/>
    </location>
    <ligand>
        <name>Zn(2+)</name>
        <dbReference type="ChEBI" id="CHEBI:29105"/>
        <note>catalytic</note>
    </ligand>
</feature>
<feature type="binding site" evidence="6">
    <location>
        <position position="392"/>
    </location>
    <ligand>
        <name>Zn(2+)</name>
        <dbReference type="ChEBI" id="CHEBI:29105"/>
        <note>catalytic</note>
    </ligand>
</feature>
<feature type="disulfide bond" evidence="2">
    <location>
        <begin position="407"/>
        <end position="465"/>
    </location>
</feature>
<feature type="sequence conflict" description="In Ref. 2; AAI02775." evidence="7" ref="2">
    <original>F</original>
    <variation>L</variation>
    <location>
        <position position="477"/>
    </location>
</feature>
<reference key="1">
    <citation type="journal article" date="2009" name="Genome Biol.">
        <title>A whole-genome assembly of the domestic cow, Bos taurus.</title>
        <authorList>
            <person name="Zimin A.V."/>
            <person name="Delcher A.L."/>
            <person name="Florea L."/>
            <person name="Kelley D.R."/>
            <person name="Schatz M.C."/>
            <person name="Puiu D."/>
            <person name="Hanrahan F."/>
            <person name="Pertea G."/>
            <person name="Van Tassell C.P."/>
            <person name="Sonstegard T.S."/>
            <person name="Marcais G."/>
            <person name="Roberts M."/>
            <person name="Subramanian P."/>
            <person name="Yorke J.A."/>
            <person name="Salzberg S.L."/>
        </authorList>
    </citation>
    <scope>NUCLEOTIDE SEQUENCE [LARGE SCALE GENOMIC DNA]</scope>
    <source>
        <strain>Hereford</strain>
    </source>
</reference>
<reference key="2">
    <citation type="submission" date="2005-08" db="EMBL/GenBank/DDBJ databases">
        <authorList>
            <consortium name="NIH - Mammalian Gene Collection (MGC) project"/>
        </authorList>
    </citation>
    <scope>NUCLEOTIDE SEQUENCE [LARGE SCALE MRNA]</scope>
    <source>
        <strain>Crossbred X Angus</strain>
        <tissue>Ileum</tissue>
    </source>
</reference>
<protein>
    <recommendedName>
        <fullName evidence="7">Metalloendopeptidase OMA1, mitochondrial</fullName>
        <ecNumber evidence="3">3.4.24.-</ecNumber>
    </recommendedName>
    <alternativeName>
        <fullName evidence="3">Overlapping with the m-AAA protease 1 homolog</fullName>
    </alternativeName>
</protein>
<dbReference type="EC" id="3.4.24.-" evidence="3"/>
<dbReference type="EMBL" id="DAAA02008763">
    <property type="status" value="NOT_ANNOTATED_CDS"/>
    <property type="molecule type" value="Genomic_DNA"/>
</dbReference>
<dbReference type="EMBL" id="BC102774">
    <property type="protein sequence ID" value="AAI02775.1"/>
    <property type="molecule type" value="mRNA"/>
</dbReference>
<dbReference type="RefSeq" id="NP_001030205.1">
    <property type="nucleotide sequence ID" value="NM_001035033.2"/>
</dbReference>
<dbReference type="RefSeq" id="XP_005204593.1">
    <property type="nucleotide sequence ID" value="XM_005204536.4"/>
</dbReference>
<dbReference type="RefSeq" id="XP_024842135.1">
    <property type="nucleotide sequence ID" value="XM_024986367.2"/>
</dbReference>
<dbReference type="RefSeq" id="XP_059738671.1">
    <property type="nucleotide sequence ID" value="XM_059882688.1"/>
</dbReference>
<dbReference type="SMR" id="Q3SZN3"/>
<dbReference type="FunCoup" id="Q3SZN3">
    <property type="interactions" value="399"/>
</dbReference>
<dbReference type="STRING" id="9913.ENSBTAP00000023044"/>
<dbReference type="MEROPS" id="M48.017"/>
<dbReference type="PaxDb" id="9913-ENSBTAP00000023044"/>
<dbReference type="Ensembl" id="ENSBTAT00000023044.6">
    <property type="protein sequence ID" value="ENSBTAP00000023044.5"/>
    <property type="gene ID" value="ENSBTAG00000017326.7"/>
</dbReference>
<dbReference type="GeneID" id="506223"/>
<dbReference type="KEGG" id="bta:506223"/>
<dbReference type="CTD" id="115209"/>
<dbReference type="VEuPathDB" id="HostDB:ENSBTAG00000017326"/>
<dbReference type="VGNC" id="VGNC:32428">
    <property type="gene designation" value="OMA1"/>
</dbReference>
<dbReference type="eggNOG" id="KOG2661">
    <property type="taxonomic scope" value="Eukaryota"/>
</dbReference>
<dbReference type="GeneTree" id="ENSGT00390000007027"/>
<dbReference type="HOGENOM" id="CLU_039633_0_0_1"/>
<dbReference type="InParanoid" id="Q3SZN3"/>
<dbReference type="OMA" id="TFILGHE"/>
<dbReference type="OrthoDB" id="7464992at2759"/>
<dbReference type="TreeFam" id="TF329133"/>
<dbReference type="Reactome" id="R-BTA-169911">
    <property type="pathway name" value="Regulation of Apoptosis"/>
</dbReference>
<dbReference type="Reactome" id="R-BTA-9840373">
    <property type="pathway name" value="Cellular response to mitochondrial stress"/>
</dbReference>
<dbReference type="Proteomes" id="UP000009136">
    <property type="component" value="Chromosome 3"/>
</dbReference>
<dbReference type="Bgee" id="ENSBTAG00000017326">
    <property type="expression patterns" value="Expressed in oocyte and 105 other cell types or tissues"/>
</dbReference>
<dbReference type="GO" id="GO:0005743">
    <property type="term" value="C:mitochondrial inner membrane"/>
    <property type="evidence" value="ECO:0000250"/>
    <property type="project" value="UniProtKB"/>
</dbReference>
<dbReference type="GO" id="GO:0005758">
    <property type="term" value="C:mitochondrial intermembrane space"/>
    <property type="evidence" value="ECO:0007669"/>
    <property type="project" value="Ensembl"/>
</dbReference>
<dbReference type="GO" id="GO:0031966">
    <property type="term" value="C:mitochondrial membrane"/>
    <property type="evidence" value="ECO:0000250"/>
    <property type="project" value="UniProtKB"/>
</dbReference>
<dbReference type="GO" id="GO:0008289">
    <property type="term" value="F:lipid binding"/>
    <property type="evidence" value="ECO:0007669"/>
    <property type="project" value="UniProtKB-KW"/>
</dbReference>
<dbReference type="GO" id="GO:0046872">
    <property type="term" value="F:metal ion binding"/>
    <property type="evidence" value="ECO:0007669"/>
    <property type="project" value="UniProtKB-KW"/>
</dbReference>
<dbReference type="GO" id="GO:0004222">
    <property type="term" value="F:metalloendopeptidase activity"/>
    <property type="evidence" value="ECO:0000250"/>
    <property type="project" value="UniProtKB"/>
</dbReference>
<dbReference type="GO" id="GO:0002024">
    <property type="term" value="P:diet induced thermogenesis"/>
    <property type="evidence" value="ECO:0000250"/>
    <property type="project" value="UniProtKB"/>
</dbReference>
<dbReference type="GO" id="GO:0097009">
    <property type="term" value="P:energy homeostasis"/>
    <property type="evidence" value="ECO:0000250"/>
    <property type="project" value="UniProtKB"/>
</dbReference>
<dbReference type="GO" id="GO:0006006">
    <property type="term" value="P:glucose metabolic process"/>
    <property type="evidence" value="ECO:0000250"/>
    <property type="project" value="UniProtKB"/>
</dbReference>
<dbReference type="GO" id="GO:0140468">
    <property type="term" value="P:HRI-mediated signaling"/>
    <property type="evidence" value="ECO:0000250"/>
    <property type="project" value="UniProtKB"/>
</dbReference>
<dbReference type="GO" id="GO:0140467">
    <property type="term" value="P:integrated stress response signaling"/>
    <property type="evidence" value="ECO:0000250"/>
    <property type="project" value="UniProtKB"/>
</dbReference>
<dbReference type="GO" id="GO:0006629">
    <property type="term" value="P:lipid metabolic process"/>
    <property type="evidence" value="ECO:0000250"/>
    <property type="project" value="UniProtKB"/>
</dbReference>
<dbReference type="GO" id="GO:0034982">
    <property type="term" value="P:mitochondrial protein processing"/>
    <property type="evidence" value="ECO:0000250"/>
    <property type="project" value="UniProtKB"/>
</dbReference>
<dbReference type="GO" id="GO:0033108">
    <property type="term" value="P:mitochondrial respiratory chain complex assembly"/>
    <property type="evidence" value="ECO:0000250"/>
    <property type="project" value="UniProtKB"/>
</dbReference>
<dbReference type="GO" id="GO:0010637">
    <property type="term" value="P:negative regulation of mitochondrial fusion"/>
    <property type="evidence" value="ECO:0000250"/>
    <property type="project" value="UniProtKB"/>
</dbReference>
<dbReference type="GO" id="GO:0043065">
    <property type="term" value="P:positive regulation of apoptotic process"/>
    <property type="evidence" value="ECO:0000250"/>
    <property type="project" value="UniProtKB"/>
</dbReference>
<dbReference type="GO" id="GO:0016540">
    <property type="term" value="P:protein autoprocessing"/>
    <property type="evidence" value="ECO:0000250"/>
    <property type="project" value="UniProtKB"/>
</dbReference>
<dbReference type="GO" id="GO:0006515">
    <property type="term" value="P:protein quality control for misfolded or incompletely synthesized proteins"/>
    <property type="evidence" value="ECO:0000250"/>
    <property type="project" value="UniProtKB"/>
</dbReference>
<dbReference type="GO" id="GO:1903850">
    <property type="term" value="P:regulation of cristae formation"/>
    <property type="evidence" value="ECO:0000250"/>
    <property type="project" value="UniProtKB"/>
</dbReference>
<dbReference type="GO" id="GO:0031638">
    <property type="term" value="P:zymogen activation"/>
    <property type="evidence" value="ECO:0000250"/>
    <property type="project" value="UniProtKB"/>
</dbReference>
<dbReference type="CDD" id="cd07331">
    <property type="entry name" value="M48C_Oma1_like"/>
    <property type="match status" value="1"/>
</dbReference>
<dbReference type="FunFam" id="3.30.2010.10:FF:000009">
    <property type="entry name" value="metalloendopeptidase OMA1, mitochondrial isoform X1"/>
    <property type="match status" value="1"/>
</dbReference>
<dbReference type="Gene3D" id="3.30.2010.10">
    <property type="entry name" value="Metalloproteases ('zincins'), catalytic domain"/>
    <property type="match status" value="1"/>
</dbReference>
<dbReference type="InterPro" id="IPR051156">
    <property type="entry name" value="Mito/Outer_Membr_Metalloprot"/>
</dbReference>
<dbReference type="InterPro" id="IPR001915">
    <property type="entry name" value="Peptidase_M48"/>
</dbReference>
<dbReference type="PANTHER" id="PTHR22726">
    <property type="entry name" value="METALLOENDOPEPTIDASE OMA1"/>
    <property type="match status" value="1"/>
</dbReference>
<dbReference type="PANTHER" id="PTHR22726:SF1">
    <property type="entry name" value="METALLOENDOPEPTIDASE OMA1, MITOCHONDRIAL"/>
    <property type="match status" value="1"/>
</dbReference>
<dbReference type="Pfam" id="PF01435">
    <property type="entry name" value="Peptidase_M48"/>
    <property type="match status" value="1"/>
</dbReference>
<dbReference type="PROSITE" id="PS00142">
    <property type="entry name" value="ZINC_PROTEASE"/>
    <property type="match status" value="1"/>
</dbReference>
<comment type="function">
    <text evidence="3 4">Metalloprotease that is part of the quality control system in the inner membrane of mitochondria. Activated in response to various mitochondrial stress, leading to the proteolytic cleavage of target proteins, such as OPA1, UQCC3 and DELE1. Involved in the fusion of the mitochondrial inner membranes by mediating cleavage of OPA1 at S1 position, generating the soluble OPA1 (S-OPA1), which cooperates with the membrane form (L-OPA1) to coordinate the fusion of mitochondrial inner membranes. Following stress conditions that induce loss of mitochondrial membrane potential, mediates cleavage of OPA1, leading to excess production of soluble OPA1 (S-OPA1) and negative regulation of mitochondrial fusion (By similarity). Involved in mitochondrial safeguard in response to transient mitochondrial membrane depolarization (flickering) by catalyzing cleavage of OPA1, leading to excess production of S-OPA1, preventing mitochondrial hyperfusion (By similarity). Also acts as a regulator of apoptosis: upon BAK and BAX aggregation, mediates cleavage of OPA1, leading to the remodeling of mitochondrial cristae and allowing the release of cytochrome c from mitochondrial cristae. In depolarized mitochondria, may also act as a backup protease for PINK1 by mediating PINK1 cleavage and promoting its subsequent degradation by the proteasome. May also cleave UQCC3 in response to mitochondrial depolarization. Also acts as an activator of the integrated stress response (ISR): in response to mitochondrial stress, mediates cleavage of DELE1 to generate the processed form of DELE1 (S-DELE1), which translocates to the cytosol and activates EIF2AK1/HRI to trigger the ISR (By similarity). Its role in mitochondrial quality control is essential for regulating lipid metabolism as well as to maintain body temperature and energy expenditure under cold-stress conditions (By similarity). Binds cardiolipin, possibly regulating its protein turnover (By similarity). Required for the stability of the respiratory supercomplexes (By similarity).</text>
</comment>
<comment type="cofactor">
    <cofactor evidence="1">
        <name>Zn(2+)</name>
        <dbReference type="ChEBI" id="CHEBI:29105"/>
    </cofactor>
    <text evidence="1">Binds 1 zinc ion per subunit.</text>
</comment>
<comment type="activity regulation">
    <text evidence="4">Protease activity is activated upon autocatalytic cleavage in response to mitochondrial depolarization.</text>
</comment>
<comment type="subunit">
    <text evidence="4">Homooligomer.</text>
</comment>
<comment type="subcellular location">
    <subcellularLocation>
        <location evidence="4">Mitochondrion inner membrane</location>
        <topology evidence="4">Single-pass membrane protein</topology>
    </subcellularLocation>
</comment>
<comment type="domain">
    <text evidence="4">The stress-sensor region regulates proteolysis and activation.</text>
</comment>
<comment type="PTM">
    <text evidence="3 4">Autocatalytically cleaved in response to mitochondrial depolarization both at the N-terminus and C-terminus to generate the short active form (S-OMA1). Autocatalytic processing at the C-terminus takes place at residues 447-456. The S-OMA1 form is unstable (By similarity). OMA1 pre-processing by AFG3L2 may participate in maturation before OMA1 autocatalytic cleavage (By similarity). Degraded by YMEL1 in response to membrane depolarization (By similarity). Protein turnover is regulated by prohibitin (PHB and PHB2), which promotes degradation of OMA1 in a cardiolipin-binding manner (By similarity).</text>
</comment>
<comment type="PTM">
    <text evidence="2 3">May form a redox-dependent disulfide bond (By similarity). Exists in a semi-oxidized state and is activated by prolonged hypoxia (By similarity).</text>
</comment>
<comment type="similarity">
    <text evidence="7">Belongs to the peptidase M48 family.</text>
</comment>
<name>OMA1_BOVIN</name>
<gene>
    <name evidence="3" type="primary">OMA1</name>
</gene>
<evidence type="ECO:0000250" key="1">
    <source>
        <dbReference type="UniProtKB" id="O75844"/>
    </source>
</evidence>
<evidence type="ECO:0000250" key="2">
    <source>
        <dbReference type="UniProtKB" id="P36163"/>
    </source>
</evidence>
<evidence type="ECO:0000250" key="3">
    <source>
        <dbReference type="UniProtKB" id="Q96E52"/>
    </source>
</evidence>
<evidence type="ECO:0000250" key="4">
    <source>
        <dbReference type="UniProtKB" id="Q9D8H7"/>
    </source>
</evidence>
<evidence type="ECO:0000255" key="5"/>
<evidence type="ECO:0000255" key="6">
    <source>
        <dbReference type="PROSITE-ProRule" id="PRU10095"/>
    </source>
</evidence>
<evidence type="ECO:0000305" key="7"/>
<accession>Q3SZN3</accession>
<accession>F1N0Z4</accession>
<keyword id="KW-0068">Autocatalytic cleavage</keyword>
<keyword id="KW-1015">Disulfide bond</keyword>
<keyword id="KW-0378">Hydrolase</keyword>
<keyword id="KW-0446">Lipid-binding</keyword>
<keyword id="KW-0472">Membrane</keyword>
<keyword id="KW-0479">Metal-binding</keyword>
<keyword id="KW-0482">Metalloprotease</keyword>
<keyword id="KW-0496">Mitochondrion</keyword>
<keyword id="KW-0999">Mitochondrion inner membrane</keyword>
<keyword id="KW-0645">Protease</keyword>
<keyword id="KW-1185">Reference proteome</keyword>
<keyword id="KW-0809">Transit peptide</keyword>
<keyword id="KW-0812">Transmembrane</keyword>
<keyword id="KW-1133">Transmembrane helix</keyword>
<keyword id="KW-0862">Zinc</keyword>
<keyword id="KW-0865">Zymogen</keyword>
<organism>
    <name type="scientific">Bos taurus</name>
    <name type="common">Bovine</name>
    <dbReference type="NCBI Taxonomy" id="9913"/>
    <lineage>
        <taxon>Eukaryota</taxon>
        <taxon>Metazoa</taxon>
        <taxon>Chordata</taxon>
        <taxon>Craniata</taxon>
        <taxon>Vertebrata</taxon>
        <taxon>Euteleostomi</taxon>
        <taxon>Mammalia</taxon>
        <taxon>Eutheria</taxon>
        <taxon>Laurasiatheria</taxon>
        <taxon>Artiodactyla</taxon>
        <taxon>Ruminantia</taxon>
        <taxon>Pecora</taxon>
        <taxon>Bovidae</taxon>
        <taxon>Bovinae</taxon>
        <taxon>Bos</taxon>
    </lineage>
</organism>